<accession>P23785</accession>
<evidence type="ECO:0000250" key="1">
    <source>
        <dbReference type="UniProtKB" id="P28798"/>
    </source>
</evidence>
<evidence type="ECO:0000250" key="2">
    <source>
        <dbReference type="UniProtKB" id="P28799"/>
    </source>
</evidence>
<evidence type="ECO:0000255" key="3"/>
<evidence type="ECO:0000269" key="4">
    <source>
    </source>
</evidence>
<evidence type="ECO:0000303" key="5">
    <source>
    </source>
</evidence>
<evidence type="ECO:0000303" key="6">
    <source>
    </source>
</evidence>
<evidence type="ECO:0000303" key="7">
    <source>
    </source>
</evidence>
<evidence type="ECO:0000305" key="8"/>
<sequence>MWILVSWLALVARLVAGTQCPDGQFCPVACCLDQGGANYSCCNPLLDTWPIITSRRLDGSCQIRDHCPDGYSCLLTVSGTSSCCPFSEGVSCDDGQHCCPRGFHCSADGKSCSQISDSLLGAVQCPGSQFECPDSATCCIMIDGSWGCCPMPQASCCEDRVHCCPHGASCDLVHTRCISPTGTHPLLKKFPAQRTNRAVASFSVVCPDAKTQCPDDSTCCELPTGKYGCCPMPNAICCSDHLHCCPQDTVCDLIQSKCISKDYTTDLMTKLPGYPVNEVKCDLEVSCPDGYTCCRLNTGAWGCCPFTKAVCCEDHIHCCPAGFQCHTETGTCELGVLQVPWMKKVTASLSLPDPQILKNDVPCDDFSSCPSNNTCCRLSSGDWGCCPMPEAVCCLDHQHCCPQGFKCMDEGYCQKGDRMVAGLEKMPVRQTTLLQHGDIGCDQHTSCPVGQTCCPSLKGSWACCQLPHAVCCEDRQHCCPAGYTCNVKARTCEKDAGSVQPSMDLTFGSKVGNVECGAGHFCHDNQSCCKDSQGGWACCPYVKGVCCRDGRHCCPIGFHCSAKGTKCLRKKTPRWDILLRDPAPRPLL</sequence>
<proteinExistence type="evidence at protein level"/>
<keyword id="KW-0202">Cytokine</keyword>
<keyword id="KW-0903">Direct protein sequencing</keyword>
<keyword id="KW-1015">Disulfide bond</keyword>
<keyword id="KW-0325">Glycoprotein</keyword>
<keyword id="KW-0458">Lysosome</keyword>
<keyword id="KW-1185">Reference proteome</keyword>
<keyword id="KW-0677">Repeat</keyword>
<keyword id="KW-0964">Secreted</keyword>
<keyword id="KW-0732">Signal</keyword>
<gene>
    <name type="primary">Grn</name>
</gene>
<dbReference type="EMBL" id="M97750">
    <property type="protein sequence ID" value="AAA16903.1"/>
    <property type="molecule type" value="mRNA"/>
</dbReference>
<dbReference type="EMBL" id="X62322">
    <property type="protein sequence ID" value="CAA44198.1"/>
    <property type="molecule type" value="mRNA"/>
</dbReference>
<dbReference type="PIR" id="B38128">
    <property type="entry name" value="B38128"/>
</dbReference>
<dbReference type="RefSeq" id="NP_058809.2">
    <property type="nucleotide sequence ID" value="NM_017113.2"/>
</dbReference>
<dbReference type="SMR" id="P23785"/>
<dbReference type="BioGRID" id="247826">
    <property type="interactions" value="4"/>
</dbReference>
<dbReference type="FunCoup" id="P23785">
    <property type="interactions" value="557"/>
</dbReference>
<dbReference type="IntAct" id="P23785">
    <property type="interactions" value="2"/>
</dbReference>
<dbReference type="STRING" id="10116.ENSRNOP00000028557"/>
<dbReference type="GlyCosmos" id="P23785">
    <property type="glycosylation" value="3 sites, No reported glycans"/>
</dbReference>
<dbReference type="GlyGen" id="P23785">
    <property type="glycosylation" value="3 sites"/>
</dbReference>
<dbReference type="PhosphoSitePlus" id="P23785"/>
<dbReference type="jPOST" id="P23785"/>
<dbReference type="PaxDb" id="10116-ENSRNOP00000028557"/>
<dbReference type="GeneID" id="29143"/>
<dbReference type="KEGG" id="rno:29143"/>
<dbReference type="UCSC" id="RGD:61983">
    <property type="organism name" value="rat"/>
</dbReference>
<dbReference type="AGR" id="RGD:61983"/>
<dbReference type="CTD" id="2896"/>
<dbReference type="RGD" id="61983">
    <property type="gene designation" value="Grn"/>
</dbReference>
<dbReference type="eggNOG" id="KOG4296">
    <property type="taxonomic scope" value="Eukaryota"/>
</dbReference>
<dbReference type="InParanoid" id="P23785"/>
<dbReference type="OrthoDB" id="50867at9989"/>
<dbReference type="PhylomeDB" id="P23785"/>
<dbReference type="Reactome" id="R-RNO-6798695">
    <property type="pathway name" value="Neutrophil degranulation"/>
</dbReference>
<dbReference type="PRO" id="PR:P23785"/>
<dbReference type="Proteomes" id="UP000002494">
    <property type="component" value="Unplaced"/>
</dbReference>
<dbReference type="GO" id="GO:0150053">
    <property type="term" value="C:cerebellar climbing fiber to Purkinje cell synapse"/>
    <property type="evidence" value="ECO:0000266"/>
    <property type="project" value="RGD"/>
</dbReference>
<dbReference type="GO" id="GO:0005783">
    <property type="term" value="C:endoplasmic reticulum"/>
    <property type="evidence" value="ECO:0000250"/>
    <property type="project" value="UniProtKB"/>
</dbReference>
<dbReference type="GO" id="GO:0005576">
    <property type="term" value="C:extracellular region"/>
    <property type="evidence" value="ECO:0000250"/>
    <property type="project" value="UniProtKB"/>
</dbReference>
<dbReference type="GO" id="GO:0005615">
    <property type="term" value="C:extracellular space"/>
    <property type="evidence" value="ECO:0000266"/>
    <property type="project" value="RGD"/>
</dbReference>
<dbReference type="GO" id="GO:0098978">
    <property type="term" value="C:glutamatergic synapse"/>
    <property type="evidence" value="ECO:0000314"/>
    <property type="project" value="SynGO"/>
</dbReference>
<dbReference type="GO" id="GO:0005794">
    <property type="term" value="C:Golgi apparatus"/>
    <property type="evidence" value="ECO:0000250"/>
    <property type="project" value="UniProtKB"/>
</dbReference>
<dbReference type="GO" id="GO:0005770">
    <property type="term" value="C:late endosome"/>
    <property type="evidence" value="ECO:0000250"/>
    <property type="project" value="UniProtKB"/>
</dbReference>
<dbReference type="GO" id="GO:0005765">
    <property type="term" value="C:lysosomal membrane"/>
    <property type="evidence" value="ECO:0000250"/>
    <property type="project" value="UniProtKB"/>
</dbReference>
<dbReference type="GO" id="GO:0005764">
    <property type="term" value="C:lysosome"/>
    <property type="evidence" value="ECO:0000250"/>
    <property type="project" value="UniProtKB"/>
</dbReference>
<dbReference type="GO" id="GO:0016020">
    <property type="term" value="C:membrane"/>
    <property type="evidence" value="ECO:0000250"/>
    <property type="project" value="UniProtKB"/>
</dbReference>
<dbReference type="GO" id="GO:0005886">
    <property type="term" value="C:plasma membrane"/>
    <property type="evidence" value="ECO:0000250"/>
    <property type="project" value="UniProtKB"/>
</dbReference>
<dbReference type="GO" id="GO:0098793">
    <property type="term" value="C:presynapse"/>
    <property type="evidence" value="ECO:0007669"/>
    <property type="project" value="GOC"/>
</dbReference>
<dbReference type="GO" id="GO:0045202">
    <property type="term" value="C:synapse"/>
    <property type="evidence" value="ECO:0000314"/>
    <property type="project" value="SynGO"/>
</dbReference>
<dbReference type="GO" id="GO:0005802">
    <property type="term" value="C:trans-Golgi network"/>
    <property type="evidence" value="ECO:0000250"/>
    <property type="project" value="UniProtKB"/>
</dbReference>
<dbReference type="GO" id="GO:0031982">
    <property type="term" value="C:vesicle"/>
    <property type="evidence" value="ECO:0000250"/>
    <property type="project" value="UniProtKB"/>
</dbReference>
<dbReference type="GO" id="GO:0005125">
    <property type="term" value="F:cytokine activity"/>
    <property type="evidence" value="ECO:0007669"/>
    <property type="project" value="UniProtKB-KW"/>
</dbReference>
<dbReference type="GO" id="GO:0051087">
    <property type="term" value="F:protein-folding chaperone binding"/>
    <property type="evidence" value="ECO:0000250"/>
    <property type="project" value="UniProtKB"/>
</dbReference>
<dbReference type="GO" id="GO:0002265">
    <property type="term" value="P:astrocyte activation involved in immune response"/>
    <property type="evidence" value="ECO:0000250"/>
    <property type="project" value="UniProtKB"/>
</dbReference>
<dbReference type="GO" id="GO:0001835">
    <property type="term" value="P:blastocyst hatching"/>
    <property type="evidence" value="ECO:0000266"/>
    <property type="project" value="RGD"/>
</dbReference>
<dbReference type="GO" id="GO:0035988">
    <property type="term" value="P:chondrocyte proliferation"/>
    <property type="evidence" value="ECO:0000315"/>
    <property type="project" value="RGD"/>
</dbReference>
<dbReference type="GO" id="GO:0007566">
    <property type="term" value="P:embryo implantation"/>
    <property type="evidence" value="ECO:0000266"/>
    <property type="project" value="RGD"/>
</dbReference>
<dbReference type="GO" id="GO:0050673">
    <property type="term" value="P:epithelial cell proliferation"/>
    <property type="evidence" value="ECO:0000266"/>
    <property type="project" value="RGD"/>
</dbReference>
<dbReference type="GO" id="GO:0035641">
    <property type="term" value="P:locomotory exploration behavior"/>
    <property type="evidence" value="ECO:0000266"/>
    <property type="project" value="RGD"/>
</dbReference>
<dbReference type="GO" id="GO:0007042">
    <property type="term" value="P:lysosomal lumen acidification"/>
    <property type="evidence" value="ECO:0000250"/>
    <property type="project" value="UniProtKB"/>
</dbReference>
<dbReference type="GO" id="GO:1905146">
    <property type="term" value="P:lysosomal protein catabolic process"/>
    <property type="evidence" value="ECO:0000266"/>
    <property type="project" value="RGD"/>
</dbReference>
<dbReference type="GO" id="GO:0007041">
    <property type="term" value="P:lysosomal transport"/>
    <property type="evidence" value="ECO:0000250"/>
    <property type="project" value="UniProtKB"/>
</dbReference>
<dbReference type="GO" id="GO:0007040">
    <property type="term" value="P:lysosome organization"/>
    <property type="evidence" value="ECO:0000250"/>
    <property type="project" value="UniProtKB"/>
</dbReference>
<dbReference type="GO" id="GO:0099558">
    <property type="term" value="P:maintenance of synapse structure"/>
    <property type="evidence" value="ECO:0000266"/>
    <property type="project" value="RGD"/>
</dbReference>
<dbReference type="GO" id="GO:0060179">
    <property type="term" value="P:male mating behavior"/>
    <property type="evidence" value="ECO:0000315"/>
    <property type="project" value="RGD"/>
</dbReference>
<dbReference type="GO" id="GO:0002282">
    <property type="term" value="P:microglial cell activation involved in immune response"/>
    <property type="evidence" value="ECO:0000250"/>
    <property type="project" value="UniProtKB"/>
</dbReference>
<dbReference type="GO" id="GO:0050728">
    <property type="term" value="P:negative regulation of inflammatory response"/>
    <property type="evidence" value="ECO:0000250"/>
    <property type="project" value="UniProtKB"/>
</dbReference>
<dbReference type="GO" id="GO:0045824">
    <property type="term" value="P:negative regulation of innate immune response"/>
    <property type="evidence" value="ECO:0000250"/>
    <property type="project" value="UniProtKB"/>
</dbReference>
<dbReference type="GO" id="GO:1903979">
    <property type="term" value="P:negative regulation of microglial cell activation"/>
    <property type="evidence" value="ECO:0000250"/>
    <property type="project" value="UniProtKB"/>
</dbReference>
<dbReference type="GO" id="GO:0043524">
    <property type="term" value="P:negative regulation of neuron apoptotic process"/>
    <property type="evidence" value="ECO:0000250"/>
    <property type="project" value="UniProtKB"/>
</dbReference>
<dbReference type="GO" id="GO:1902564">
    <property type="term" value="P:negative regulation of neutrophil activation"/>
    <property type="evidence" value="ECO:0000250"/>
    <property type="project" value="UniProtKB"/>
</dbReference>
<dbReference type="GO" id="GO:0060266">
    <property type="term" value="P:negative regulation of respiratory burst involved in inflammatory response"/>
    <property type="evidence" value="ECO:0000250"/>
    <property type="project" value="UniProtKB"/>
</dbReference>
<dbReference type="GO" id="GO:0061351">
    <property type="term" value="P:neural precursor cell proliferation"/>
    <property type="evidence" value="ECO:0000315"/>
    <property type="project" value="RGD"/>
</dbReference>
<dbReference type="GO" id="GO:0045766">
    <property type="term" value="P:positive regulation of angiogenesis"/>
    <property type="evidence" value="ECO:0000250"/>
    <property type="project" value="UniProtKB"/>
</dbReference>
<dbReference type="GO" id="GO:1905247">
    <property type="term" value="P:positive regulation of aspartic-type peptidase activity"/>
    <property type="evidence" value="ECO:0000250"/>
    <property type="project" value="UniProtKB"/>
</dbReference>
<dbReference type="GO" id="GO:0048680">
    <property type="term" value="P:positive regulation of axon regeneration"/>
    <property type="evidence" value="ECO:0000250"/>
    <property type="project" value="UniProtKB"/>
</dbReference>
<dbReference type="GO" id="GO:0030335">
    <property type="term" value="P:positive regulation of cell migration"/>
    <property type="evidence" value="ECO:0000266"/>
    <property type="project" value="RGD"/>
</dbReference>
<dbReference type="GO" id="GO:0008284">
    <property type="term" value="P:positive regulation of cell population proliferation"/>
    <property type="evidence" value="ECO:0000250"/>
    <property type="project" value="UniProtKB"/>
</dbReference>
<dbReference type="GO" id="GO:1900426">
    <property type="term" value="P:positive regulation of defense response to bacterium"/>
    <property type="evidence" value="ECO:0000250"/>
    <property type="project" value="UniProtKB"/>
</dbReference>
<dbReference type="GO" id="GO:0060999">
    <property type="term" value="P:positive regulation of dendritic spine development"/>
    <property type="evidence" value="ECO:0000315"/>
    <property type="project" value="RGD"/>
</dbReference>
<dbReference type="GO" id="GO:0010595">
    <property type="term" value="P:positive regulation of endothelial cell migration"/>
    <property type="evidence" value="ECO:0000250"/>
    <property type="project" value="UniProtKB"/>
</dbReference>
<dbReference type="GO" id="GO:0050679">
    <property type="term" value="P:positive regulation of epithelial cell proliferation"/>
    <property type="evidence" value="ECO:0000250"/>
    <property type="project" value="UniProtKB"/>
</dbReference>
<dbReference type="GO" id="GO:0106016">
    <property type="term" value="P:positive regulation of inflammatory response to wounding"/>
    <property type="evidence" value="ECO:0000250"/>
    <property type="project" value="UniProtKB"/>
</dbReference>
<dbReference type="GO" id="GO:1905673">
    <property type="term" value="P:positive regulation of lysosome organization"/>
    <property type="evidence" value="ECO:0000250"/>
    <property type="project" value="UniProtKB"/>
</dbReference>
<dbReference type="GO" id="GO:0043525">
    <property type="term" value="P:positive regulation of neuron apoptotic process"/>
    <property type="evidence" value="ECO:0000250"/>
    <property type="project" value="UniProtKB"/>
</dbReference>
<dbReference type="GO" id="GO:0010976">
    <property type="term" value="P:positive regulation of neuron projection development"/>
    <property type="evidence" value="ECO:0000315"/>
    <property type="project" value="RGD"/>
</dbReference>
<dbReference type="GO" id="GO:1903334">
    <property type="term" value="P:positive regulation of protein folding"/>
    <property type="evidence" value="ECO:0000250"/>
    <property type="project" value="UniProtKB"/>
</dbReference>
<dbReference type="GO" id="GO:1904075">
    <property type="term" value="P:positive regulation of trophectodermal cell proliferation"/>
    <property type="evidence" value="ECO:0000266"/>
    <property type="project" value="RGD"/>
</dbReference>
<dbReference type="GO" id="GO:0050821">
    <property type="term" value="P:protein stabilization"/>
    <property type="evidence" value="ECO:0000250"/>
    <property type="project" value="UniProtKB"/>
</dbReference>
<dbReference type="GO" id="GO:0050727">
    <property type="term" value="P:regulation of inflammatory response"/>
    <property type="evidence" value="ECO:0000318"/>
    <property type="project" value="GO_Central"/>
</dbReference>
<dbReference type="GO" id="GO:1905671">
    <property type="term" value="P:regulation of lysosome organization"/>
    <property type="evidence" value="ECO:0000266"/>
    <property type="project" value="RGD"/>
</dbReference>
<dbReference type="GO" id="GO:0032355">
    <property type="term" value="P:response to estradiol"/>
    <property type="evidence" value="ECO:0000314"/>
    <property type="project" value="RGD"/>
</dbReference>
<dbReference type="GO" id="GO:0060041">
    <property type="term" value="P:retina development in camera-type eye"/>
    <property type="evidence" value="ECO:0000266"/>
    <property type="project" value="RGD"/>
</dbReference>
<dbReference type="GO" id="GO:0048488">
    <property type="term" value="P:synaptic vesicle endocytosis"/>
    <property type="evidence" value="ECO:0000315"/>
    <property type="project" value="RGD"/>
</dbReference>
<dbReference type="GO" id="GO:0001834">
    <property type="term" value="P:trophectodermal cell proliferation"/>
    <property type="evidence" value="ECO:0000266"/>
    <property type="project" value="RGD"/>
</dbReference>
<dbReference type="FunFam" id="2.10.25.160:FF:000001">
    <property type="entry name" value="Granulin precursor"/>
    <property type="match status" value="5"/>
</dbReference>
<dbReference type="FunFam" id="2.10.25.160:FF:000004">
    <property type="entry name" value="Granulin precursor"/>
    <property type="match status" value="1"/>
</dbReference>
<dbReference type="FunFam" id="2.10.25.160:FF:000003">
    <property type="entry name" value="Progranulin"/>
    <property type="match status" value="1"/>
</dbReference>
<dbReference type="Gene3D" id="2.10.25.160">
    <property type="entry name" value="Granulin"/>
    <property type="match status" value="7"/>
</dbReference>
<dbReference type="InterPro" id="IPR000118">
    <property type="entry name" value="Granulin"/>
</dbReference>
<dbReference type="InterPro" id="IPR039036">
    <property type="entry name" value="Granulin_fam"/>
</dbReference>
<dbReference type="InterPro" id="IPR037277">
    <property type="entry name" value="Granulin_sf"/>
</dbReference>
<dbReference type="PANTHER" id="PTHR12274">
    <property type="entry name" value="GRANULIN"/>
    <property type="match status" value="1"/>
</dbReference>
<dbReference type="PANTHER" id="PTHR12274:SF3">
    <property type="entry name" value="PROGRANULIN"/>
    <property type="match status" value="1"/>
</dbReference>
<dbReference type="Pfam" id="PF00396">
    <property type="entry name" value="Granulin"/>
    <property type="match status" value="7"/>
</dbReference>
<dbReference type="SMART" id="SM00277">
    <property type="entry name" value="GRAN"/>
    <property type="match status" value="7"/>
</dbReference>
<dbReference type="SUPFAM" id="SSF57277">
    <property type="entry name" value="Granulin repeat"/>
    <property type="match status" value="6"/>
</dbReference>
<dbReference type="PROSITE" id="PS00799">
    <property type="entry name" value="GRANULINS"/>
    <property type="match status" value="7"/>
</dbReference>
<comment type="function">
    <text evidence="1 2">Secreted protein that acts as a key regulator of lysosomal function and as a growth factor involved in inflammation, wound healing and cell proliferation (By similarity). Regulates protein trafficking to lysosomes, and also the activity of lysosomal enzymes (By similarity). Also facilitates the acidification of lysosomes, causing degradation of mature CTSD by CTSB (By similarity). In addition, functions as a wound-related growth factor that acts directly on dermal fibroblasts and endothelial cells to promote division, migration and the formation of capillary-like tubule structures (By similarity). Also promotes epithelial cell proliferation by blocking TNF-mediated neutrophil activation preventing release of oxidants and proteases (By similarity). Moreover, modulates inflammation in neurons by preserving neurons survival, axonal outgrowth and neuronal integrity (By similarity).</text>
</comment>
<comment type="function">
    <molecule>Granulin-3</molecule>
    <text evidence="2">Inhibits epithelial cell proliferation and induces epithelial cells to secrete IL-8.</text>
</comment>
<comment type="function">
    <molecule>Granulin-7</molecule>
    <text evidence="2">Stabilizes CTSD through interaction with CTSD leading to maintain its aspartic-type peptidase activity.</text>
</comment>
<comment type="subunit">
    <text evidence="2">Progranulin is secreted as a homodimer. Interacts with SLPI; interaction protects progranulin from proteolysis. Interacts (via region corresponding to granulin-7 peptide) with CTSD; stabilizes CTSD and increases its proteolytic activity. Interacts (via region corresponding to granulin-7 peptide) with SORT1; this interaction mediates endocytosis and lysosome delivery of progranulin; interaction occurs at the neuronal cell surface in a stressed nervous system. Interacts with PSAP; facilitates lysosomal delivery of progranulin from the extracellular space and the biosynthetic pathway. Forms a complex with PSAP and M6PR; PSAP bridges the binding between progranulin and M6PR. Forms a complex with PSAP and SORT1; progranulin bridges the interaction between PSAP and SORT1; facilitates lysosomal targeting of PSAP via SORT1; interaction enhances PSAP uptake in primary cortical neurons. Interacts (via regions corresponding to granulin-2 and granulin-7 peptides) with GBA1; this interaction prevents aggregation of GBA1-SCARB2 complex via interaction with HSPA1A upon stress. Interacts (via region corresponding to granulin-7 peptide) with HSPA1A; mediates recruitment of HSPA1A to GBA1 and prevents GBA1 aggregation in response to stress.</text>
</comment>
<comment type="subcellular location">
    <subcellularLocation>
        <location evidence="2">Secreted</location>
    </subcellularLocation>
    <subcellularLocation>
        <location evidence="2">Lysosome</location>
    </subcellularLocation>
    <text evidence="1 2">Endocytosed by SORT1 and delivred to lysosomes. Targeted to lysosome by PSAP via M6PR and LRP1, in both biosynthetic and endocytic pathways (By similarity). Co-localized with GBA1 in the intracellular trafficking compartments until to lysosome (By similarity).</text>
</comment>
<comment type="tissue specificity">
    <text evidence="4">Ubiquitous; most abundant in the spleen and several tissues of endocrine significance.</text>
</comment>
<comment type="PTM">
    <text evidence="2">Cleaved by ELANE; proteolysis is blocked by SLPI and is concentration- and time-dependent and induces CXCL8/IL-8 production; granulin-3 and granulin-4 are resistant to ELANE. Cleaved by CTSL in lysosome thus regulating the maturation and turnover of progranulin within the lysosome.</text>
</comment>
<comment type="similarity">
    <text evidence="8">Belongs to the granulin family.</text>
</comment>
<reference key="1">
    <citation type="journal article" date="1993" name="Endocrinology">
        <title>The complementary deoxyribonucleic acid sequence, tissue distribution, and cellular localization of the rat granulin precursor.</title>
        <authorList>
            <person name="Bhandari V."/>
            <person name="Giaid A."/>
            <person name="Bateman A."/>
        </authorList>
    </citation>
    <scope>NUCLEOTIDE SEQUENCE [MRNA]</scope>
    <source>
        <tissue>Kidney</tissue>
    </source>
</reference>
<reference key="2">
    <citation type="journal article" date="1992" name="J. Biol. Chem.">
        <title>The epithelin precursor encodes two proteins with opposing activities on epithelial cell growth.</title>
        <authorList>
            <person name="Plowman G.D."/>
            <person name="Green J.M."/>
            <person name="Neubauer M.G."/>
            <person name="Buckley S.D."/>
            <person name="McDonald V.L."/>
            <person name="Todaro G.J."/>
            <person name="Shoyab M."/>
        </authorList>
    </citation>
    <scope>NUCLEOTIDE SEQUENCE [MRNA]</scope>
    <scope>PROTEIN SEQUENCE OF 204-259 AND 278-334</scope>
    <source>
        <tissue>Kidney</tissue>
    </source>
</reference>
<reference key="3">
    <citation type="journal article" date="1990" name="Proc. Natl. Acad. Sci. U.S.A.">
        <title>Epithelins 1 and 2: isolation and characterization of two cysteine-rich growth-modulating proteins.</title>
        <authorList>
            <person name="Shoyab M."/>
            <person name="McDonald V.L."/>
            <person name="Byles C."/>
            <person name="Todaro G.J."/>
            <person name="Plowman G.D."/>
        </authorList>
    </citation>
    <scope>PROTEIN SEQUENCE OF 204-225 AND 279-299</scope>
</reference>
<reference key="4">
    <citation type="journal article" date="1990" name="Biochem. Biophys. Res. Commun.">
        <title>Granulins, a novel class of peptide from leukocytes.</title>
        <authorList>
            <person name="Bateman A."/>
            <person name="Belcourt D.R."/>
            <person name="Bennett H.P."/>
            <person name="Lazure C."/>
            <person name="Solomon S."/>
        </authorList>
    </citation>
    <scope>PROTEIN SEQUENCE OF 278-328</scope>
    <source>
        <tissue>Bone marrow</tissue>
    </source>
</reference>
<organism>
    <name type="scientific">Rattus norvegicus</name>
    <name type="common">Rat</name>
    <dbReference type="NCBI Taxonomy" id="10116"/>
    <lineage>
        <taxon>Eukaryota</taxon>
        <taxon>Metazoa</taxon>
        <taxon>Chordata</taxon>
        <taxon>Craniata</taxon>
        <taxon>Vertebrata</taxon>
        <taxon>Euteleostomi</taxon>
        <taxon>Mammalia</taxon>
        <taxon>Eutheria</taxon>
        <taxon>Euarchontoglires</taxon>
        <taxon>Glires</taxon>
        <taxon>Rodentia</taxon>
        <taxon>Myomorpha</taxon>
        <taxon>Muroidea</taxon>
        <taxon>Muridae</taxon>
        <taxon>Murinae</taxon>
        <taxon>Rattus</taxon>
    </lineage>
</organism>
<protein>
    <recommendedName>
        <fullName evidence="2">Progranulin</fullName>
        <shortName evidence="2">PGRN</shortName>
    </recommendedName>
    <alternativeName>
        <fullName evidence="1">Acrogranin</fullName>
    </alternativeName>
    <alternativeName>
        <fullName evidence="5">Epithelin precursor</fullName>
    </alternativeName>
    <alternativeName>
        <fullName evidence="7">Granulin precursor</fullName>
    </alternativeName>
    <alternativeName>
        <fullName>Proepithelin</fullName>
        <shortName evidence="2">PEPI</shortName>
    </alternativeName>
    <component>
        <recommendedName>
            <fullName>Paragranulin</fullName>
        </recommendedName>
    </component>
    <component>
        <recommendedName>
            <fullName>Granulin-1</fullName>
        </recommendedName>
        <alternativeName>
            <fullName>Granulin G</fullName>
        </alternativeName>
    </component>
    <component>
        <recommendedName>
            <fullName>Granulin-2</fullName>
        </recommendedName>
        <alternativeName>
            <fullName>Granulin F</fullName>
        </alternativeName>
    </component>
    <component>
        <recommendedName>
            <fullName>Granulin-3</fullName>
        </recommendedName>
        <alternativeName>
            <fullName evidence="6">Epithelin-2</fullName>
        </alternativeName>
        <alternativeName>
            <fullName>Granulin B</fullName>
        </alternativeName>
    </component>
    <component>
        <recommendedName>
            <fullName>Granulin-4</fullName>
        </recommendedName>
        <alternativeName>
            <fullName evidence="6">Epithelin-1</fullName>
        </alternativeName>
        <alternativeName>
            <fullName>Granulin A</fullName>
        </alternativeName>
    </component>
    <component>
        <recommendedName>
            <fullName>Granulin-5</fullName>
        </recommendedName>
        <alternativeName>
            <fullName>Granulin C</fullName>
        </alternativeName>
    </component>
    <component>
        <recommendedName>
            <fullName>Granulin-6</fullName>
        </recommendedName>
        <alternativeName>
            <fullName>Granulin D</fullName>
        </alternativeName>
    </component>
    <component>
        <recommendedName>
            <fullName>Granulin-7</fullName>
        </recommendedName>
        <alternativeName>
            <fullName>Granulin E</fullName>
        </alternativeName>
    </component>
</protein>
<name>GRN_RAT</name>
<feature type="signal peptide" evidence="3">
    <location>
        <begin position="1"/>
        <end position="17"/>
    </location>
</feature>
<feature type="chain" id="PRO_0000012710" description="Progranulin">
    <location>
        <begin position="18"/>
        <end position="588"/>
    </location>
</feature>
<feature type="peptide" id="PRO_0000446332" description="Paragranulin" evidence="2">
    <location>
        <begin position="18"/>
        <end position="47"/>
    </location>
</feature>
<feature type="peptide" id="PRO_0000012711" description="Granulin-1">
    <location>
        <begin position="58"/>
        <end position="113"/>
    </location>
</feature>
<feature type="peptide" id="PRO_0000012712" description="Granulin-2">
    <location>
        <begin position="122"/>
        <end position="178"/>
    </location>
</feature>
<feature type="peptide" id="PRO_0000012713" description="Granulin-3">
    <location>
        <begin position="204"/>
        <end position="259"/>
    </location>
</feature>
<feature type="peptide" id="PRO_0000012714" description="Granulin-4">
    <location>
        <begin position="278"/>
        <end position="334"/>
    </location>
</feature>
<feature type="peptide" id="PRO_0000012715" description="Granulin-5">
    <location>
        <begin position="361"/>
        <end position="413"/>
    </location>
</feature>
<feature type="peptide" id="PRO_0000012716" description="Granulin-6">
    <location>
        <begin position="438"/>
        <end position="492"/>
    </location>
</feature>
<feature type="peptide" id="PRO_0000012717" description="Granulin-7">
    <location>
        <begin position="512"/>
        <end position="567"/>
    </location>
</feature>
<feature type="glycosylation site" description="N-linked (GlcNAc...) asparagine" evidence="3">
    <location>
        <position position="38"/>
    </location>
</feature>
<feature type="glycosylation site" description="N-linked (GlcNAc...) asparagine" evidence="3">
    <location>
        <position position="372"/>
    </location>
</feature>
<feature type="glycosylation site" description="N-linked (GlcNAc...) asparagine" evidence="3">
    <location>
        <position position="525"/>
    </location>
</feature>
<feature type="disulfide bond" evidence="2">
    <location>
        <begin position="125"/>
        <end position="138"/>
    </location>
</feature>
<feature type="disulfide bond" evidence="2">
    <location>
        <begin position="132"/>
        <end position="148"/>
    </location>
</feature>
<feature type="disulfide bond" evidence="2">
    <location>
        <begin position="281"/>
        <end position="293"/>
    </location>
</feature>
<feature type="disulfide bond" evidence="2">
    <location>
        <begin position="287"/>
        <end position="303"/>
    </location>
</feature>
<feature type="disulfide bond" evidence="2">
    <location>
        <begin position="294"/>
        <end position="311"/>
    </location>
</feature>
<feature type="disulfide bond" evidence="2">
    <location>
        <begin position="304"/>
        <end position="318"/>
    </location>
</feature>
<feature type="disulfide bond" evidence="2">
    <location>
        <begin position="312"/>
        <end position="325"/>
    </location>
</feature>
<feature type="disulfide bond" evidence="2">
    <location>
        <begin position="319"/>
        <end position="332"/>
    </location>
</feature>
<feature type="disulfide bond" evidence="2">
    <location>
        <begin position="363"/>
        <end position="375"/>
    </location>
</feature>
<feature type="disulfide bond" evidence="2">
    <location>
        <begin position="369"/>
        <end position="385"/>
    </location>
</feature>
<feature type="disulfide bond" evidence="2">
    <location>
        <begin position="394"/>
        <end position="407"/>
    </location>
</feature>
<feature type="disulfide bond" evidence="2">
    <location>
        <begin position="401"/>
        <end position="413"/>
    </location>
</feature>
<feature type="sequence conflict" description="In Ref. 2; CAA44198." evidence="8" ref="2">
    <original>S</original>
    <variation>FP</variation>
    <location>
        <position position="201"/>
    </location>
</feature>
<feature type="sequence conflict" description="In Ref. 4; AA sequence." evidence="8" ref="4">
    <original>TK</original>
    <variation>SB</variation>
    <location>
        <begin position="307"/>
        <end position="308"/>
    </location>
</feature>
<feature type="sequence conflict" description="In Ref. 4; AA sequence." evidence="8" ref="4">
    <original>Q</original>
    <variation>T</variation>
    <location>
        <position position="324"/>
    </location>
</feature>
<feature type="sequence conflict" description="In Ref. 2; CAA44198." evidence="8" ref="2">
    <original>M</original>
    <variation>I</variation>
    <location>
        <position position="388"/>
    </location>
</feature>